<proteinExistence type="evidence at protein level"/>
<organism>
    <name type="scientific">Pseudomonas aeruginosa (strain ATCC 15692 / DSM 22644 / CIP 104116 / JCM 14847 / LMG 12228 / 1C / PRS 101 / PAO1)</name>
    <dbReference type="NCBI Taxonomy" id="208964"/>
    <lineage>
        <taxon>Bacteria</taxon>
        <taxon>Pseudomonadati</taxon>
        <taxon>Pseudomonadota</taxon>
        <taxon>Gammaproteobacteria</taxon>
        <taxon>Pseudomonadales</taxon>
        <taxon>Pseudomonadaceae</taxon>
        <taxon>Pseudomonas</taxon>
    </lineage>
</organism>
<evidence type="ECO:0000255" key="1"/>
<evidence type="ECO:0000255" key="2">
    <source>
        <dbReference type="PROSITE-ProRule" id="PRU00253"/>
    </source>
</evidence>
<evidence type="ECO:0000269" key="3">
    <source>
    </source>
</evidence>
<evidence type="ECO:0000269" key="4">
    <source>
    </source>
</evidence>
<evidence type="ECO:0000269" key="5">
    <source>
    </source>
</evidence>
<evidence type="ECO:0000269" key="6">
    <source>
    </source>
</evidence>
<evidence type="ECO:0000269" key="7">
    <source>
    </source>
</evidence>
<evidence type="ECO:0000303" key="8">
    <source>
    </source>
</evidence>
<evidence type="ECO:0000303" key="9">
    <source>
    </source>
</evidence>
<evidence type="ECO:0000303" key="10">
    <source>
    </source>
</evidence>
<evidence type="ECO:0000303" key="11">
    <source>
    </source>
</evidence>
<evidence type="ECO:0000305" key="12"/>
<evidence type="ECO:0007744" key="13">
    <source>
        <dbReference type="PDB" id="5MMH"/>
    </source>
</evidence>
<evidence type="ECO:0007829" key="14">
    <source>
        <dbReference type="PDB" id="5MMH"/>
    </source>
</evidence>
<name>AMPR_PSEAE</name>
<sequence length="296" mass="32603">MVRPHLPLNALRAFEASARHLSFTRAAIELCVTQAAVSHQVKSLEERLGVALFKRLPRGLMLTHEGESLLPVLCDSFDRIAGLLERFEGGHYRDVLTVGAVGTFTVGWLLPRLEDFQARHPFIDLRLSTHNNRVDIAAEGLDYAIRFGGGAWHGTEALALFEAPLTVLCCPEVAAQLHSPADLLQHTLLRSYRADEWPLWFQAAGLPAHAPLTRSIVFDTSLAMLEAARQGVGVALAPAAMFARQLASESIRRPFATEVSTGSYWLTRLQSRGETSAMLAFRGWLLEMAAVEARGR</sequence>
<dbReference type="EMBL" id="X67095">
    <property type="protein sequence ID" value="CAA47470.1"/>
    <property type="molecule type" value="Genomic_DNA"/>
</dbReference>
<dbReference type="EMBL" id="AE004091">
    <property type="protein sequence ID" value="AAG07496.1"/>
    <property type="molecule type" value="Genomic_DNA"/>
</dbReference>
<dbReference type="EMBL" id="X54719">
    <property type="protein sequence ID" value="CAA38523.2"/>
    <property type="molecule type" value="Genomic_DNA"/>
</dbReference>
<dbReference type="PIR" id="E83132">
    <property type="entry name" value="E83132"/>
</dbReference>
<dbReference type="PIR" id="S24954">
    <property type="entry name" value="S24954"/>
</dbReference>
<dbReference type="RefSeq" id="NP_252798.1">
    <property type="nucleotide sequence ID" value="NC_002516.2"/>
</dbReference>
<dbReference type="RefSeq" id="WP_003101291.1">
    <property type="nucleotide sequence ID" value="NZ_QZGE01000013.1"/>
</dbReference>
<dbReference type="PDB" id="5MMH">
    <property type="method" value="X-ray"/>
    <property type="resolution" value="2.20 A"/>
    <property type="chains" value="A/B/C/D=84-296"/>
</dbReference>
<dbReference type="PDBsum" id="5MMH"/>
<dbReference type="SMR" id="P24734"/>
<dbReference type="STRING" id="208964.PA4109"/>
<dbReference type="PaxDb" id="208964-PA4109"/>
<dbReference type="GeneID" id="877983"/>
<dbReference type="KEGG" id="pae:PA4109"/>
<dbReference type="PATRIC" id="fig|208964.12.peg.4305"/>
<dbReference type="PseudoCAP" id="PA4109"/>
<dbReference type="HOGENOM" id="CLU_039613_37_0_6"/>
<dbReference type="InParanoid" id="P24734"/>
<dbReference type="OrthoDB" id="5526340at2"/>
<dbReference type="PhylomeDB" id="P24734"/>
<dbReference type="BioCyc" id="PAER208964:G1FZ6-4182-MONOMER"/>
<dbReference type="Proteomes" id="UP000002438">
    <property type="component" value="Chromosome"/>
</dbReference>
<dbReference type="CollecTF" id="EXPREG_000009a0"/>
<dbReference type="GO" id="GO:0005737">
    <property type="term" value="C:cytoplasm"/>
    <property type="evidence" value="ECO:0007669"/>
    <property type="project" value="UniProtKB-SubCell"/>
</dbReference>
<dbReference type="GO" id="GO:0016020">
    <property type="term" value="C:membrane"/>
    <property type="evidence" value="ECO:0007669"/>
    <property type="project" value="UniProtKB-SubCell"/>
</dbReference>
<dbReference type="GO" id="GO:0003700">
    <property type="term" value="F:DNA-binding transcription factor activity"/>
    <property type="evidence" value="ECO:0000318"/>
    <property type="project" value="GO_Central"/>
</dbReference>
<dbReference type="GO" id="GO:0043565">
    <property type="term" value="F:sequence-specific DNA binding"/>
    <property type="evidence" value="ECO:0000318"/>
    <property type="project" value="GO_Central"/>
</dbReference>
<dbReference type="GO" id="GO:0006351">
    <property type="term" value="P:DNA-templated transcription"/>
    <property type="evidence" value="ECO:0000318"/>
    <property type="project" value="GO_Central"/>
</dbReference>
<dbReference type="GO" id="GO:1900232">
    <property type="term" value="P:negative regulation of single-species biofilm formation on inanimate substrate"/>
    <property type="evidence" value="ECO:0000315"/>
    <property type="project" value="PseudoCAP"/>
</dbReference>
<dbReference type="GO" id="GO:0050714">
    <property type="term" value="P:positive regulation of protein secretion"/>
    <property type="evidence" value="ECO:0000315"/>
    <property type="project" value="PseudoCAP"/>
</dbReference>
<dbReference type="GO" id="GO:0045862">
    <property type="term" value="P:positive regulation of proteolysis"/>
    <property type="evidence" value="ECO:0000315"/>
    <property type="project" value="PseudoCAP"/>
</dbReference>
<dbReference type="GO" id="GO:1900378">
    <property type="term" value="P:positive regulation of secondary metabolite biosynthetic process"/>
    <property type="evidence" value="ECO:0000315"/>
    <property type="project" value="PseudoCAP"/>
</dbReference>
<dbReference type="GO" id="GO:0006355">
    <property type="term" value="P:regulation of DNA-templated transcription"/>
    <property type="evidence" value="ECO:0000314"/>
    <property type="project" value="PseudoCAP"/>
</dbReference>
<dbReference type="CDD" id="cd08484">
    <property type="entry name" value="PBP2_LTTR_beta_lactamase"/>
    <property type="match status" value="1"/>
</dbReference>
<dbReference type="FunFam" id="1.10.10.10:FF:000038">
    <property type="entry name" value="Glycine cleavage system transcriptional activator"/>
    <property type="match status" value="1"/>
</dbReference>
<dbReference type="Gene3D" id="3.40.190.10">
    <property type="entry name" value="Periplasmic binding protein-like II"/>
    <property type="match status" value="2"/>
</dbReference>
<dbReference type="Gene3D" id="1.10.10.10">
    <property type="entry name" value="Winged helix-like DNA-binding domain superfamily/Winged helix DNA-binding domain"/>
    <property type="match status" value="1"/>
</dbReference>
<dbReference type="InterPro" id="IPR037420">
    <property type="entry name" value="AmpR_PBP2"/>
</dbReference>
<dbReference type="InterPro" id="IPR005119">
    <property type="entry name" value="LysR_subst-bd"/>
</dbReference>
<dbReference type="InterPro" id="IPR000847">
    <property type="entry name" value="Tscrpt_reg_HTH_LysR"/>
</dbReference>
<dbReference type="InterPro" id="IPR036388">
    <property type="entry name" value="WH-like_DNA-bd_sf"/>
</dbReference>
<dbReference type="InterPro" id="IPR036390">
    <property type="entry name" value="WH_DNA-bd_sf"/>
</dbReference>
<dbReference type="PANTHER" id="PTHR30537:SF70">
    <property type="entry name" value="HTH-TYPE TRANSCRIPTIONAL ACTIVATOR AMPR"/>
    <property type="match status" value="1"/>
</dbReference>
<dbReference type="PANTHER" id="PTHR30537">
    <property type="entry name" value="HTH-TYPE TRANSCRIPTIONAL REGULATOR"/>
    <property type="match status" value="1"/>
</dbReference>
<dbReference type="Pfam" id="PF00126">
    <property type="entry name" value="HTH_1"/>
    <property type="match status" value="1"/>
</dbReference>
<dbReference type="Pfam" id="PF03466">
    <property type="entry name" value="LysR_substrate"/>
    <property type="match status" value="1"/>
</dbReference>
<dbReference type="PRINTS" id="PR00039">
    <property type="entry name" value="HTHLYSR"/>
</dbReference>
<dbReference type="SUPFAM" id="SSF53850">
    <property type="entry name" value="Periplasmic binding protein-like II"/>
    <property type="match status" value="1"/>
</dbReference>
<dbReference type="SUPFAM" id="SSF46785">
    <property type="entry name" value="Winged helix' DNA-binding domain"/>
    <property type="match status" value="1"/>
</dbReference>
<dbReference type="PROSITE" id="PS50931">
    <property type="entry name" value="HTH_LYSR"/>
    <property type="match status" value="1"/>
</dbReference>
<protein>
    <recommendedName>
        <fullName>HTH-type transcriptional activator AmpR</fullName>
    </recommendedName>
</protein>
<accession>P24734</accession>
<reference key="1">
    <citation type="journal article" date="1993" name="FEMS Microbiol. Lett.">
        <title>Investigation of the Pseudomonas aeruginosa ampR gene and its role at the chromosomal ampC beta-lactamase promoter.</title>
        <authorList>
            <person name="Lodge J.M."/>
            <person name="Busby S.J.W."/>
            <person name="Piddock L.J.V."/>
        </authorList>
    </citation>
    <scope>NUCLEOTIDE SEQUENCE [GENOMIC DNA]</scope>
    <scope>FUNCTION</scope>
    <source>
        <strain>ATCC 15692 / DSM 22644 / CIP 104116 / JCM 14847 / LMG 12228 / 1C / PRS 101 / PAO1</strain>
    </source>
</reference>
<reference key="2">
    <citation type="journal article" date="2000" name="Nature">
        <title>Complete genome sequence of Pseudomonas aeruginosa PAO1, an opportunistic pathogen.</title>
        <authorList>
            <person name="Stover C.K."/>
            <person name="Pham X.-Q.T."/>
            <person name="Erwin A.L."/>
            <person name="Mizoguchi S.D."/>
            <person name="Warrener P."/>
            <person name="Hickey M.J."/>
            <person name="Brinkman F.S.L."/>
            <person name="Hufnagle W.O."/>
            <person name="Kowalik D.J."/>
            <person name="Lagrou M."/>
            <person name="Garber R.L."/>
            <person name="Goltry L."/>
            <person name="Tolentino E."/>
            <person name="Westbrock-Wadman S."/>
            <person name="Yuan Y."/>
            <person name="Brody L.L."/>
            <person name="Coulter S.N."/>
            <person name="Folger K.R."/>
            <person name="Kas A."/>
            <person name="Larbig K."/>
            <person name="Lim R.M."/>
            <person name="Smith K.A."/>
            <person name="Spencer D.H."/>
            <person name="Wong G.K.-S."/>
            <person name="Wu Z."/>
            <person name="Paulsen I.T."/>
            <person name="Reizer J."/>
            <person name="Saier M.H. Jr."/>
            <person name="Hancock R.E.W."/>
            <person name="Lory S."/>
            <person name="Olson M.V."/>
        </authorList>
    </citation>
    <scope>NUCLEOTIDE SEQUENCE [LARGE SCALE GENOMIC DNA]</scope>
    <source>
        <strain>ATCC 15692 / DSM 22644 / CIP 104116 / JCM 14847 / LMG 12228 / 1C / PRS 101 / PAO1</strain>
    </source>
</reference>
<reference key="3">
    <citation type="journal article" date="1990" name="Biochem. J.">
        <title>Cloning, sequencing and analysis of the structural gene and regulatory region of the Pseudomonas aeruginosa chromosomal ampC beta-lactamase.</title>
        <authorList>
            <person name="Lodge J.M."/>
            <person name="Minchin S.D."/>
            <person name="Piddock L.J.V."/>
            <person name="Busby S.J.W."/>
        </authorList>
    </citation>
    <scope>NUCLEOTIDE SEQUENCE [GENOMIC DNA] OF 1-135</scope>
    <source>
        <strain>ATCC 15692 / DSM 22644 / CIP 104116 / JCM 14847 / LMG 12228 / 1C / PRS 101 / PAO1</strain>
    </source>
</reference>
<reference key="4">
    <citation type="submission" date="2010-06" db="EMBL/GenBank/DDBJ databases">
        <authorList>
            <person name="Lodge J.M."/>
        </authorList>
    </citation>
    <scope>SEQUENCE REVISION TO 6</scope>
</reference>
<reference key="5">
    <citation type="journal article" date="2005" name="Antimicrob. Agents Chemother.">
        <title>Pseudomonas aeruginosa AmpR is a global transcriptional factor that regulates expression of AmpC and PoxB beta-lactamases, proteases, quorum sensing, and other virulence factors.</title>
        <authorList>
            <person name="Kong K.F."/>
            <person name="Jayawardena S.R."/>
            <person name="Indulkar S.D."/>
            <person name="Del Puerto A."/>
            <person name="Koh C.L."/>
            <person name="Hoeiby N."/>
            <person name="Mathee K."/>
        </authorList>
    </citation>
    <scope>FUNCTION</scope>
</reference>
<reference key="6">
    <citation type="journal article" date="2012" name="Antimicrob. Agents Chemother.">
        <title>Genetic markers of widespread extensively drug-resistant Pseudomonas aeruginosa high-risk clones.</title>
        <authorList>
            <consortium name="Spanish Network for Research in Infectious Diseases (REIPI)"/>
            <person name="Cabot G."/>
            <person name="Ocampo-Sosa A.A."/>
            <person name="Dominguez M.A."/>
            <person name="Gago J.F."/>
            <person name="Juan C."/>
            <person name="Tubau F."/>
            <person name="Rodriguez C."/>
            <person name="Moya B."/>
            <person name="Pena C."/>
            <person name="Martinez-Martinez L."/>
            <person name="Oliver A."/>
        </authorList>
    </citation>
    <scope>FUNCTION</scope>
    <scope>MUTAGENESIS OF GLY-154</scope>
    <source>
        <strain evidence="9">ST175</strain>
    </source>
</reference>
<reference key="7">
    <citation type="journal article" date="2014" name="J. Bacteriol.">
        <title>Structural and functional characterization of Pseudomonas aeruginosa global regulator AmpR.</title>
        <authorList>
            <person name="Caille O."/>
            <person name="Zincke D."/>
            <person name="Merighi M."/>
            <person name="Balasubramanian D."/>
            <person name="Kumari H."/>
            <person name="Kong K.F."/>
            <person name="Silva-Herzog E."/>
            <person name="Narasimhan G."/>
            <person name="Schneper L."/>
            <person name="Lory S."/>
            <person name="Mathee K."/>
        </authorList>
    </citation>
    <scope>FUNCTION</scope>
    <scope>SUBUNIT</scope>
    <scope>SUBCELLULAR LOCATION</scope>
    <scope>INDUCTION BY BETA-LACTAMS; RPON</scope>
    <scope>MUTAGENESIS OF SER-38; HIS-39; LYS-42; SER-43; GLU-46; GLY-102 AND ASP-135</scope>
</reference>
<reference evidence="13" key="8">
    <citation type="journal article" date="2017" name="J. Am. Chem. Soc.">
        <title>Muropeptide Binding and the X-ray Structure of the Effector Domain of the Transcriptional Regulator AmpR of Pseudomonas aeruginosa.</title>
        <authorList>
            <person name="Dik D.A."/>
            <person name="Dominguez-Gil T."/>
            <person name="Lee M."/>
            <person name="Hesek D."/>
            <person name="Byun B."/>
            <person name="Fishovitz J."/>
            <person name="Boggess B."/>
            <person name="Hellman L.M."/>
            <person name="Fisher J.F."/>
            <person name="Hermoso J.A."/>
            <person name="Mobashery S."/>
        </authorList>
    </citation>
    <scope>X-RAY CRYSTALLOGRAPHY (2.20 ANGSTROMS) OF 83-296</scope>
    <scope>DOMAIN</scope>
</reference>
<feature type="chain" id="PRO_0000105589" description="HTH-type transcriptional activator AmpR">
    <location>
        <begin position="1"/>
        <end position="296"/>
    </location>
</feature>
<feature type="domain" description="HTH lysR-type" evidence="2">
    <location>
        <begin position="6"/>
        <end position="63"/>
    </location>
</feature>
<feature type="domain" description="LysR substrate-binding" evidence="1 6">
    <location>
        <begin position="91"/>
        <end position="289"/>
    </location>
</feature>
<feature type="DNA-binding region" description="H-T-H motif" evidence="2">
    <location>
        <begin position="23"/>
        <end position="42"/>
    </location>
</feature>
<feature type="region of interest" description="Includes the LysR substrate-binding / effector-binding domain, involved in binding to specific cell-wall-derived muropeptide products, some of which have signaling functions, leading to disparate responses such as antibiotic resistance, virulence, and host cell inflammation" evidence="6">
    <location>
        <begin position="83"/>
        <end position="296"/>
    </location>
</feature>
<feature type="mutagenesis site" description="Abolishes the activation of ampC transcription. Abolishes binding to the ampC promoter." evidence="5">
    <original>S</original>
    <variation>A</variation>
    <location>
        <position position="38"/>
    </location>
</feature>
<feature type="mutagenesis site" description="Abolishes the activation of ampC transcription. Binds normally to the ampC promoter, in the presence and absence of beta-lactams." evidence="5">
    <original>H</original>
    <variation>A</variation>
    <location>
        <position position="39"/>
    </location>
</feature>
<feature type="mutagenesis site" description="Abolishes the activation of ampC transcription. Reduces binding to the ampC promoter." evidence="5">
    <original>K</original>
    <variation>A</variation>
    <location>
        <position position="42"/>
    </location>
</feature>
<feature type="mutagenesis site" description="Does not affect the activation of ampC transcription. Able to bind the ampC promoter in the presence and absence of beta-lactams." evidence="5">
    <original>S</original>
    <variation>A</variation>
    <location>
        <position position="43"/>
    </location>
</feature>
<feature type="mutagenesis site" description="Does not affect the activation of ampC transcription. Able to bind the ampC promoter in the presence and absence of beta-lactams." evidence="5">
    <original>E</original>
    <variation>A</variation>
    <location>
        <position position="46"/>
    </location>
</feature>
<feature type="mutagenesis site" description="Abolishes the activation of ampC transcription, probably as a result of destabilization of the protein." evidence="5">
    <original>G</original>
    <variation>E</variation>
    <location>
        <position position="102"/>
    </location>
</feature>
<feature type="mutagenesis site" description="Increases the activation of ampC transcription, independent of the presence of beta-lactams." evidence="5">
    <original>D</original>
    <variation>N</variation>
    <location>
        <position position="135"/>
    </location>
</feature>
<feature type="mutagenesis site" description="Causes significantly increased basal transcription of beta-lactamase ampC gene, probably by acting as a hypermorphic allele. Increases resistance to beta-lactam antibiotic ceftazidime. First observed in clinical isolates of sequence type strain ST175." evidence="4">
    <original>G</original>
    <variation>R</variation>
    <location>
        <position position="154"/>
    </location>
</feature>
<feature type="sequence conflict" description="In Ref. 1; CAA47470 and 3; CAA38523." evidence="12" ref="1 3">
    <original>R</original>
    <variation>A</variation>
    <location>
        <position position="12"/>
    </location>
</feature>
<feature type="sequence conflict" description="In Ref. 1; CAA47470." evidence="12" ref="1">
    <original>A</original>
    <variation>G</variation>
    <location>
        <position position="237"/>
    </location>
</feature>
<feature type="strand" evidence="14">
    <location>
        <begin position="95"/>
        <end position="101"/>
    </location>
</feature>
<feature type="helix" evidence="14">
    <location>
        <begin position="102"/>
        <end position="107"/>
    </location>
</feature>
<feature type="helix" evidence="14">
    <location>
        <begin position="109"/>
        <end position="119"/>
    </location>
</feature>
<feature type="strand" evidence="14">
    <location>
        <begin position="124"/>
        <end position="130"/>
    </location>
</feature>
<feature type="helix" evidence="14">
    <location>
        <begin position="136"/>
        <end position="139"/>
    </location>
</feature>
<feature type="strand" evidence="14">
    <location>
        <begin position="142"/>
        <end position="148"/>
    </location>
</feature>
<feature type="strand" evidence="14">
    <location>
        <begin position="155"/>
        <end position="162"/>
    </location>
</feature>
<feature type="strand" evidence="14">
    <location>
        <begin position="165"/>
        <end position="169"/>
    </location>
</feature>
<feature type="helix" evidence="14">
    <location>
        <begin position="171"/>
        <end position="175"/>
    </location>
</feature>
<feature type="helix" evidence="14">
    <location>
        <begin position="180"/>
        <end position="185"/>
    </location>
</feature>
<feature type="strand" evidence="14">
    <location>
        <begin position="188"/>
        <end position="192"/>
    </location>
</feature>
<feature type="helix" evidence="14">
    <location>
        <begin position="196"/>
        <end position="203"/>
    </location>
</feature>
<feature type="strand" evidence="14">
    <location>
        <begin position="213"/>
        <end position="220"/>
    </location>
</feature>
<feature type="helix" evidence="14">
    <location>
        <begin position="221"/>
        <end position="229"/>
    </location>
</feature>
<feature type="strand" evidence="14">
    <location>
        <begin position="234"/>
        <end position="238"/>
    </location>
</feature>
<feature type="helix" evidence="14">
    <location>
        <begin position="239"/>
        <end position="241"/>
    </location>
</feature>
<feature type="helix" evidence="14">
    <location>
        <begin position="243"/>
        <end position="247"/>
    </location>
</feature>
<feature type="strand" evidence="14">
    <location>
        <begin position="250"/>
        <end position="252"/>
    </location>
</feature>
<feature type="strand" evidence="14">
    <location>
        <begin position="263"/>
        <end position="269"/>
    </location>
</feature>
<feature type="helix" evidence="14">
    <location>
        <begin position="276"/>
        <end position="296"/>
    </location>
</feature>
<comment type="function">
    <text evidence="3 4 5 7">Transcription regulator that plays a critical role in the expression of beta-lactamase AmpC, acting by positive regulation of the ampC gene (PubMed:16251297, PubMed:23045355, PubMed:25182487, PubMed:8405939). Has a wider role in the regulation of expression of genes involved in proteolysis, quorum sensing, and virulence (PubMed:16251297). Acts by binding directly to the promoter region of the ampC gene (PubMed:25182487, PubMed:8405939). Probably does not regulate transcription of its own gene (PubMed:16251297).</text>
</comment>
<comment type="subunit">
    <text evidence="5">Homodimer.</text>
</comment>
<comment type="subcellular location">
    <subcellularLocation>
        <location evidence="12">Cytoplasm</location>
    </subcellularLocation>
    <subcellularLocation>
        <location evidence="10">Membrane</location>
    </subcellularLocation>
</comment>
<comment type="induction">
    <text evidence="5">Up-regulated by beta-lactams (PubMed:25182487). Expression is negatively regulated by sigma factor RpoN, possibly through promoter blocking (PubMed:25182487).</text>
</comment>
<comment type="domain">
    <text evidence="6">Effector binding domain recognizes specific cell-wall-derived muropeptide products, probably acting as a link between cell-wall recycling/repair and the induction of resistance to beta-lactam antibiotics.</text>
</comment>
<comment type="miscellaneous">
    <text evidence="8 11">Orthologs in several species of Enterobacteria, but no known ortholog in E.coli.</text>
</comment>
<comment type="similarity">
    <text evidence="12">Belongs to the LysR transcriptional regulatory family.</text>
</comment>
<keyword id="KW-0002">3D-structure</keyword>
<keyword id="KW-0010">Activator</keyword>
<keyword id="KW-0963">Cytoplasm</keyword>
<keyword id="KW-0238">DNA-binding</keyword>
<keyword id="KW-0472">Membrane</keyword>
<keyword id="KW-1185">Reference proteome</keyword>
<keyword id="KW-0804">Transcription</keyword>
<keyword id="KW-0805">Transcription regulation</keyword>
<gene>
    <name type="primary">ampR</name>
    <name type="ordered locus">PA4109</name>
</gene>